<gene>
    <name evidence="5" type="primary">STP10</name>
    <name evidence="10" type="ordered locus">At3g19940</name>
    <name evidence="11" type="ORF">MPN9.19</name>
</gene>
<feature type="chain" id="PRO_0000050440" description="Sugar transport protein 10">
    <location>
        <begin position="1"/>
        <end position="514"/>
    </location>
</feature>
<feature type="topological domain" description="Cytoplasmic" evidence="1">
    <location>
        <begin position="1"/>
        <end position="18"/>
    </location>
</feature>
<feature type="transmembrane region" description="Helical; Name=1" evidence="1">
    <location>
        <begin position="19"/>
        <end position="39"/>
    </location>
</feature>
<feature type="transmembrane region" description="Helical; Name=2" evidence="1">
    <location>
        <begin position="86"/>
        <end position="106"/>
    </location>
</feature>
<feature type="transmembrane region" description="Helical; Name=3" evidence="1">
    <location>
        <begin position="113"/>
        <end position="133"/>
    </location>
</feature>
<feature type="transmembrane region" description="Helical; Name=4" evidence="1">
    <location>
        <begin position="135"/>
        <end position="155"/>
    </location>
</feature>
<feature type="transmembrane region" description="Helical; Name=5" evidence="1">
    <location>
        <begin position="170"/>
        <end position="190"/>
    </location>
</feature>
<feature type="transmembrane region" description="Helical; Name=6" evidence="1">
    <location>
        <begin position="204"/>
        <end position="224"/>
    </location>
</feature>
<feature type="transmembrane region" description="Helical; Name=7" evidence="1">
    <location>
        <begin position="285"/>
        <end position="305"/>
    </location>
</feature>
<feature type="transmembrane region" description="Helical; Name=8" evidence="1">
    <location>
        <begin position="320"/>
        <end position="340"/>
    </location>
</feature>
<feature type="transmembrane region" description="Helical; Name=9" evidence="1">
    <location>
        <begin position="350"/>
        <end position="370"/>
    </location>
</feature>
<feature type="transmembrane region" description="Helical; Name=10" evidence="1">
    <location>
        <begin position="389"/>
        <end position="409"/>
    </location>
</feature>
<feature type="transmembrane region" description="Helical; Name=11" evidence="1">
    <location>
        <begin position="428"/>
        <end position="448"/>
    </location>
</feature>
<feature type="transmembrane region" description="Helical; Name=12" evidence="1">
    <location>
        <begin position="453"/>
        <end position="473"/>
    </location>
</feature>
<feature type="topological domain" description="Cytoplasmic" evidence="1">
    <location>
        <begin position="474"/>
        <end position="514"/>
    </location>
</feature>
<feature type="binding site" evidence="3 4 12 13">
    <location>
        <position position="177"/>
    </location>
    <ligand>
        <name>beta-D-glucose</name>
        <dbReference type="ChEBI" id="CHEBI:15903"/>
    </ligand>
</feature>
<feature type="binding site" evidence="3 4 12 13">
    <location>
        <position position="295"/>
    </location>
    <ligand>
        <name>beta-D-glucose</name>
        <dbReference type="ChEBI" id="CHEBI:15903"/>
    </ligand>
</feature>
<feature type="binding site" evidence="4 13">
    <location>
        <position position="296"/>
    </location>
    <ligand>
        <name>beta-D-glucose</name>
        <dbReference type="ChEBI" id="CHEBI:15903"/>
    </ligand>
</feature>
<feature type="binding site" evidence="3 4 12 13">
    <location>
        <position position="301"/>
    </location>
    <ligand>
        <name>beta-D-glucose</name>
        <dbReference type="ChEBI" id="CHEBI:15903"/>
    </ligand>
</feature>
<feature type="binding site" evidence="3 4 12 13">
    <location>
        <position position="332"/>
    </location>
    <ligand>
        <name>beta-D-glucose</name>
        <dbReference type="ChEBI" id="CHEBI:15903"/>
    </ligand>
</feature>
<feature type="binding site" evidence="3 4 12 13">
    <location>
        <position position="410"/>
    </location>
    <ligand>
        <name>beta-D-glucose</name>
        <dbReference type="ChEBI" id="CHEBI:15903"/>
    </ligand>
</feature>
<feature type="disulfide bond" evidence="3 4 12 13">
    <location>
        <begin position="77"/>
        <end position="449"/>
    </location>
</feature>
<feature type="mutagenesis site" description="Reduces affinity for glucose 8-fold." evidence="4">
    <original>F</original>
    <variation>A</variation>
    <location>
        <position position="39"/>
    </location>
</feature>
<feature type="mutagenesis site" description="Reduces affinity for glucose 150-fold and turns STP10 into a low affinity transporter." evidence="3">
    <original>L</original>
    <variation>A</variation>
    <location>
        <position position="43"/>
    </location>
</feature>
<feature type="mutagenesis site" description="Increases sensitivity to alkaline pH and can only function fully at acidic pH (pH &lt; 5)." evidence="3">
    <original>C</original>
    <variation>A</variation>
    <location>
        <position position="77"/>
    </location>
</feature>
<feature type="mutagenesis site" description="Abolishes glucose transport activity; when associated with N-344." evidence="4">
    <original>E</original>
    <variation>Q</variation>
    <location>
        <position position="162"/>
    </location>
</feature>
<feature type="mutagenesis site" description="Reduces affinity for glucose 37-fold." evidence="4">
    <original>Q</original>
    <variation>A</variation>
    <location>
        <position position="177"/>
    </location>
</feature>
<feature type="mutagenesis site" description="Reduces affinity for glucose 3-fold." evidence="4">
    <original>I</original>
    <variation>A</variation>
    <location>
        <position position="184"/>
    </location>
</feature>
<feature type="mutagenesis site" description="Abolishes glucose transport activity; when associated with Q-162." evidence="4">
    <original>D</original>
    <variation>N</variation>
    <location>
        <position position="344"/>
    </location>
</feature>
<feature type="mutagenesis site" description="Increases sensitivity to alkaline pH and can only function fully at acidic pH (pH &lt; 5)." evidence="3">
    <original>C</original>
    <variation>A</variation>
    <location>
        <position position="449"/>
    </location>
</feature>
<feature type="helix" evidence="15">
    <location>
        <begin position="23"/>
        <end position="33"/>
    </location>
</feature>
<feature type="helix" evidence="15">
    <location>
        <begin position="36"/>
        <end position="50"/>
    </location>
</feature>
<feature type="helix" evidence="15">
    <location>
        <begin position="53"/>
        <end position="59"/>
    </location>
</feature>
<feature type="helix" evidence="15">
    <location>
        <begin position="61"/>
        <end position="67"/>
    </location>
</feature>
<feature type="turn" evidence="14">
    <location>
        <begin position="68"/>
        <end position="70"/>
    </location>
</feature>
<feature type="strand" evidence="14">
    <location>
        <begin position="71"/>
        <end position="73"/>
    </location>
</feature>
<feature type="helix" evidence="15">
    <location>
        <begin position="75"/>
        <end position="78"/>
    </location>
</feature>
<feature type="helix" evidence="15">
    <location>
        <begin position="82"/>
        <end position="109"/>
    </location>
</feature>
<feature type="helix" evidence="15">
    <location>
        <begin position="111"/>
        <end position="130"/>
    </location>
</feature>
<feature type="helix" evidence="15">
    <location>
        <begin position="135"/>
        <end position="163"/>
    </location>
</feature>
<feature type="helix" evidence="15">
    <location>
        <begin position="166"/>
        <end position="168"/>
    </location>
</feature>
<feature type="helix" evidence="15">
    <location>
        <begin position="169"/>
        <end position="194"/>
    </location>
</feature>
<feature type="strand" evidence="15">
    <location>
        <begin position="197"/>
        <end position="199"/>
    </location>
</feature>
<feature type="helix" evidence="15">
    <location>
        <begin position="201"/>
        <end position="207"/>
    </location>
</feature>
<feature type="helix" evidence="15">
    <location>
        <begin position="210"/>
        <end position="222"/>
    </location>
</feature>
<feature type="helix" evidence="15">
    <location>
        <begin position="227"/>
        <end position="232"/>
    </location>
</feature>
<feature type="helix" evidence="15">
    <location>
        <begin position="236"/>
        <end position="247"/>
    </location>
</feature>
<feature type="helix" evidence="15">
    <location>
        <begin position="253"/>
        <end position="266"/>
    </location>
</feature>
<feature type="helix" evidence="15">
    <location>
        <begin position="272"/>
        <end position="274"/>
    </location>
</feature>
<feature type="turn" evidence="15">
    <location>
        <begin position="275"/>
        <end position="277"/>
    </location>
</feature>
<feature type="helix" evidence="15">
    <location>
        <begin position="279"/>
        <end position="281"/>
    </location>
</feature>
<feature type="helix" evidence="15">
    <location>
        <begin position="282"/>
        <end position="297"/>
    </location>
</feature>
<feature type="helix" evidence="15">
    <location>
        <begin position="300"/>
        <end position="303"/>
    </location>
</feature>
<feature type="helix" evidence="15">
    <location>
        <begin position="306"/>
        <end position="313"/>
    </location>
</feature>
<feature type="helix" evidence="15">
    <location>
        <begin position="317"/>
        <end position="342"/>
    </location>
</feature>
<feature type="turn" evidence="15">
    <location>
        <begin position="343"/>
        <end position="346"/>
    </location>
</feature>
<feature type="helix" evidence="15">
    <location>
        <begin position="348"/>
        <end position="376"/>
    </location>
</feature>
<feature type="strand" evidence="15">
    <location>
        <begin position="378"/>
        <end position="381"/>
    </location>
</feature>
<feature type="helix" evidence="15">
    <location>
        <begin position="384"/>
        <end position="402"/>
    </location>
</feature>
<feature type="helix" evidence="15">
    <location>
        <begin position="405"/>
        <end position="415"/>
    </location>
</feature>
<feature type="helix" evidence="15">
    <location>
        <begin position="419"/>
        <end position="421"/>
    </location>
</feature>
<feature type="helix" evidence="15">
    <location>
        <begin position="422"/>
        <end position="443"/>
    </location>
</feature>
<feature type="helix" evidence="15">
    <location>
        <begin position="445"/>
        <end position="449"/>
    </location>
</feature>
<feature type="helix" evidence="15">
    <location>
        <begin position="454"/>
        <end position="473"/>
    </location>
</feature>
<feature type="helix" evidence="15">
    <location>
        <begin position="482"/>
        <end position="485"/>
    </location>
</feature>
<feature type="helix" evidence="15">
    <location>
        <begin position="486"/>
        <end position="490"/>
    </location>
</feature>
<feature type="helix" evidence="15">
    <location>
        <begin position="495"/>
        <end position="498"/>
    </location>
</feature>
<feature type="helix" evidence="15">
    <location>
        <begin position="501"/>
        <end position="503"/>
    </location>
</feature>
<accession>Q9LT15</accession>
<accession>O81707</accession>
<proteinExistence type="evidence at protein level"/>
<dbReference type="EMBL" id="AB025631">
    <property type="protein sequence ID" value="BAB01309.1"/>
    <property type="molecule type" value="Genomic_DNA"/>
</dbReference>
<dbReference type="EMBL" id="CP002686">
    <property type="protein sequence ID" value="AEE76310.1"/>
    <property type="molecule type" value="Genomic_DNA"/>
</dbReference>
<dbReference type="EMBL" id="DQ056599">
    <property type="protein sequence ID" value="AAY78747.1"/>
    <property type="molecule type" value="mRNA"/>
</dbReference>
<dbReference type="EMBL" id="AJ001663">
    <property type="protein sequence ID" value="CAA04908.1"/>
    <property type="molecule type" value="Genomic_DNA"/>
</dbReference>
<dbReference type="RefSeq" id="NP_188628.1">
    <property type="nucleotide sequence ID" value="NM_112884.1"/>
</dbReference>
<dbReference type="PDB" id="6H7D">
    <property type="method" value="X-ray"/>
    <property type="resolution" value="2.40 A"/>
    <property type="chains" value="A=2-514"/>
</dbReference>
<dbReference type="PDB" id="7AAQ">
    <property type="method" value="X-ray"/>
    <property type="resolution" value="1.81 A"/>
    <property type="chains" value="A=1-514"/>
</dbReference>
<dbReference type="PDB" id="7AAR">
    <property type="method" value="X-ray"/>
    <property type="resolution" value="2.64 A"/>
    <property type="chains" value="A=1-514"/>
</dbReference>
<dbReference type="PDBsum" id="6H7D"/>
<dbReference type="PDBsum" id="7AAQ"/>
<dbReference type="PDBsum" id="7AAR"/>
<dbReference type="SMR" id="Q9LT15"/>
<dbReference type="FunCoup" id="Q9LT15">
    <property type="interactions" value="200"/>
</dbReference>
<dbReference type="STRING" id="3702.Q9LT15"/>
<dbReference type="TCDB" id="2.A.1.1.124">
    <property type="family name" value="the major facilitator superfamily (mfs)"/>
</dbReference>
<dbReference type="iPTMnet" id="Q9LT15"/>
<dbReference type="PaxDb" id="3702-AT3G19940.1"/>
<dbReference type="ProteomicsDB" id="228425"/>
<dbReference type="EnsemblPlants" id="AT3G19940.1">
    <property type="protein sequence ID" value="AT3G19940.1"/>
    <property type="gene ID" value="AT3G19940"/>
</dbReference>
<dbReference type="GeneID" id="821532"/>
<dbReference type="Gramene" id="AT3G19940.1">
    <property type="protein sequence ID" value="AT3G19940.1"/>
    <property type="gene ID" value="AT3G19940"/>
</dbReference>
<dbReference type="KEGG" id="ath:AT3G19940"/>
<dbReference type="Araport" id="AT3G19940"/>
<dbReference type="TAIR" id="AT3G19940">
    <property type="gene designation" value="STP10"/>
</dbReference>
<dbReference type="eggNOG" id="KOG0254">
    <property type="taxonomic scope" value="Eukaryota"/>
</dbReference>
<dbReference type="HOGENOM" id="CLU_001265_30_5_1"/>
<dbReference type="InParanoid" id="Q9LT15"/>
<dbReference type="OMA" id="QMFICQL"/>
<dbReference type="PhylomeDB" id="Q9LT15"/>
<dbReference type="PRO" id="PR:Q9LT15"/>
<dbReference type="Proteomes" id="UP000006548">
    <property type="component" value="Chromosome 3"/>
</dbReference>
<dbReference type="ExpressionAtlas" id="Q9LT15">
    <property type="expression patterns" value="baseline and differential"/>
</dbReference>
<dbReference type="GO" id="GO:0005886">
    <property type="term" value="C:plasma membrane"/>
    <property type="evidence" value="ECO:0000314"/>
    <property type="project" value="TAIR"/>
</dbReference>
<dbReference type="GO" id="GO:0005354">
    <property type="term" value="F:galactose transmembrane transporter activity"/>
    <property type="evidence" value="ECO:0000314"/>
    <property type="project" value="TAIR"/>
</dbReference>
<dbReference type="GO" id="GO:0009679">
    <property type="term" value="F:hexose:proton symporter activity"/>
    <property type="evidence" value="ECO:0000314"/>
    <property type="project" value="TAIR"/>
</dbReference>
<dbReference type="GO" id="GO:0015578">
    <property type="term" value="F:mannose transmembrane transporter activity"/>
    <property type="evidence" value="ECO:0000314"/>
    <property type="project" value="TAIR"/>
</dbReference>
<dbReference type="GO" id="GO:0071333">
    <property type="term" value="P:cellular response to glucose stimulus"/>
    <property type="evidence" value="ECO:0000270"/>
    <property type="project" value="TAIR"/>
</dbReference>
<dbReference type="GO" id="GO:0008645">
    <property type="term" value="P:hexose transmembrane transport"/>
    <property type="evidence" value="ECO:0000314"/>
    <property type="project" value="TAIR"/>
</dbReference>
<dbReference type="CDD" id="cd17361">
    <property type="entry name" value="MFS_STP"/>
    <property type="match status" value="1"/>
</dbReference>
<dbReference type="FunFam" id="1.20.1250.20:FF:000002">
    <property type="entry name" value="Sugar transport protein 13"/>
    <property type="match status" value="1"/>
</dbReference>
<dbReference type="Gene3D" id="1.20.1250.20">
    <property type="entry name" value="MFS general substrate transporter like domains"/>
    <property type="match status" value="1"/>
</dbReference>
<dbReference type="InterPro" id="IPR020846">
    <property type="entry name" value="MFS_dom"/>
</dbReference>
<dbReference type="InterPro" id="IPR044778">
    <property type="entry name" value="MFS_STP/MST-like_plant"/>
</dbReference>
<dbReference type="InterPro" id="IPR005828">
    <property type="entry name" value="MFS_sugar_transport-like"/>
</dbReference>
<dbReference type="InterPro" id="IPR036259">
    <property type="entry name" value="MFS_trans_sf"/>
</dbReference>
<dbReference type="InterPro" id="IPR045262">
    <property type="entry name" value="STP/PLT_plant"/>
</dbReference>
<dbReference type="InterPro" id="IPR003663">
    <property type="entry name" value="Sugar/inositol_transpt"/>
</dbReference>
<dbReference type="InterPro" id="IPR005829">
    <property type="entry name" value="Sugar_transporter_CS"/>
</dbReference>
<dbReference type="NCBIfam" id="TIGR00879">
    <property type="entry name" value="SP"/>
    <property type="match status" value="1"/>
</dbReference>
<dbReference type="PANTHER" id="PTHR23500">
    <property type="entry name" value="SOLUTE CARRIER FAMILY 2, FACILITATED GLUCOSE TRANSPORTER"/>
    <property type="match status" value="1"/>
</dbReference>
<dbReference type="PANTHER" id="PTHR23500:SF584">
    <property type="entry name" value="SUGAR TRANSPORT PROTEIN 10"/>
    <property type="match status" value="1"/>
</dbReference>
<dbReference type="Pfam" id="PF00083">
    <property type="entry name" value="Sugar_tr"/>
    <property type="match status" value="1"/>
</dbReference>
<dbReference type="PRINTS" id="PR00171">
    <property type="entry name" value="SUGRTRNSPORT"/>
</dbReference>
<dbReference type="SUPFAM" id="SSF103473">
    <property type="entry name" value="MFS general substrate transporter"/>
    <property type="match status" value="1"/>
</dbReference>
<dbReference type="PROSITE" id="PS50850">
    <property type="entry name" value="MFS"/>
    <property type="match status" value="1"/>
</dbReference>
<dbReference type="PROSITE" id="PS00216">
    <property type="entry name" value="SUGAR_TRANSPORT_1"/>
    <property type="match status" value="1"/>
</dbReference>
<dbReference type="PROSITE" id="PS00217">
    <property type="entry name" value="SUGAR_TRANSPORT_2"/>
    <property type="match status" value="1"/>
</dbReference>
<organism>
    <name type="scientific">Arabidopsis thaliana</name>
    <name type="common">Mouse-ear cress</name>
    <dbReference type="NCBI Taxonomy" id="3702"/>
    <lineage>
        <taxon>Eukaryota</taxon>
        <taxon>Viridiplantae</taxon>
        <taxon>Streptophyta</taxon>
        <taxon>Embryophyta</taxon>
        <taxon>Tracheophyta</taxon>
        <taxon>Spermatophyta</taxon>
        <taxon>Magnoliopsida</taxon>
        <taxon>eudicotyledons</taxon>
        <taxon>Gunneridae</taxon>
        <taxon>Pentapetalae</taxon>
        <taxon>rosids</taxon>
        <taxon>malvids</taxon>
        <taxon>Brassicales</taxon>
        <taxon>Brassicaceae</taxon>
        <taxon>Camelineae</taxon>
        <taxon>Arabidopsis</taxon>
    </lineage>
</organism>
<name>STP10_ARATH</name>
<comment type="function">
    <text evidence="2 8 9">Hexose-H(+) symporter that catalyzes the high-affinity uptake of glucose, galactose and mannose (PubMed:26893494). Proton-coupled symporter responsible for the uptake of glucose from the apoplast into the cells (Probable).</text>
</comment>
<comment type="catalytic activity">
    <reaction evidence="2">
        <text>D-glucose(out) + H(+)(out) = D-glucose(in) + H(+)(in)</text>
        <dbReference type="Rhea" id="RHEA:69556"/>
        <dbReference type="ChEBI" id="CHEBI:4167"/>
        <dbReference type="ChEBI" id="CHEBI:15378"/>
    </reaction>
    <physiologicalReaction direction="left-to-right" evidence="2">
        <dbReference type="Rhea" id="RHEA:69557"/>
    </physiologicalReaction>
</comment>
<comment type="catalytic activity">
    <reaction evidence="2">
        <text>D-mannose(out) + H(+)(out) = D-mannose(in) + H(+)(in)</text>
        <dbReference type="Rhea" id="RHEA:69560"/>
        <dbReference type="ChEBI" id="CHEBI:4208"/>
        <dbReference type="ChEBI" id="CHEBI:15378"/>
    </reaction>
    <physiologicalReaction direction="left-to-right" evidence="2">
        <dbReference type="Rhea" id="RHEA:69561"/>
    </physiologicalReaction>
</comment>
<comment type="catalytic activity">
    <reaction evidence="2">
        <text>D-galactose(in) + H(+)(in) = D-galactose(out) + H(+)(out)</text>
        <dbReference type="Rhea" id="RHEA:29019"/>
        <dbReference type="ChEBI" id="CHEBI:4139"/>
        <dbReference type="ChEBI" id="CHEBI:15378"/>
    </reaction>
    <physiologicalReaction direction="right-to-left" evidence="2">
        <dbReference type="Rhea" id="RHEA:29021"/>
    </physiologicalReaction>
</comment>
<comment type="biophysicochemical properties">
    <kinetics>
        <KM evidence="3">2.6 uM for beta-D-glucose</KM>
    </kinetics>
</comment>
<comment type="subcellular location">
    <subcellularLocation>
        <location evidence="2">Membrane</location>
        <topology evidence="1">Multi-pass membrane protein</topology>
    </subcellularLocation>
    <text evidence="2">Localizes to the plasma membrane.</text>
</comment>
<comment type="tissue specificity">
    <text evidence="2">Expressed in primordia of lateral roots, pollinated stigmata, and pollen tubes.</text>
</comment>
<comment type="induction">
    <text evidence="2">Induced under low-glucose conditions in pollen tubes (PubMed:26893494). Down-regulated by glucose (PubMed:26893494).</text>
</comment>
<comment type="disruption phenotype">
    <text evidence="2">No visible phenotype under normal growth conditions.</text>
</comment>
<comment type="similarity">
    <text evidence="7">Belongs to the major facilitator superfamily. Sugar transporter (TC 2.A.1.1) family.</text>
</comment>
<sequence>MAGGAFVSEGGGGGRSYEGGVTAFVIMTCIVAAMGGLLFGYDLGISGGVTSMEEFLTKFFPQVESQMKKAKHDTAYCKFDNQMLQLFTSSLYLAALVASFMASVITRKHGRKVSMFIGGLAFLIGALFNAFAVNVSMLIIGRLLLGVGVGFANQSTPVYLSEMAPAKIRGALNIGFQMAITIGILVANLINYGTSKMAQHGWRVSLGLAAVPAVVMVIGSFILPDTPNSMLERGKNEEAKQMLKKIRGADNVDHEFQDLIDAVEAAKKVENPWKNIMESKYRPALIFCSAIPFFQQITGINVIMFYAPVLFKTLGFGDDAALMSAVITGVVNMLSTFVSIYAVDRYGRRLLFLEGGIQMFICQLLVGSFIGARFGTSGTGTLTPATADWILAFICVYVAGFAWSWGPLGWLVPSEICPLEIRPAGQAINVSVNMFFTFLIGQFFLTMLCHMKFGLFYFFASMVAIMTVFIYFLLPETKGVPIEEMGRVWKQHWFWKKYIPEDAIIGGHDDNNTN</sequence>
<evidence type="ECO:0000255" key="1"/>
<evidence type="ECO:0000269" key="2">
    <source>
    </source>
</evidence>
<evidence type="ECO:0000269" key="3">
    <source>
    </source>
</evidence>
<evidence type="ECO:0000269" key="4">
    <source>
    </source>
</evidence>
<evidence type="ECO:0000303" key="5">
    <source>
    </source>
</evidence>
<evidence type="ECO:0000303" key="6">
    <source>
    </source>
</evidence>
<evidence type="ECO:0000305" key="7"/>
<evidence type="ECO:0000305" key="8">
    <source>
    </source>
</evidence>
<evidence type="ECO:0000305" key="9">
    <source>
    </source>
</evidence>
<evidence type="ECO:0000312" key="10">
    <source>
        <dbReference type="Araport" id="AT3G19940"/>
    </source>
</evidence>
<evidence type="ECO:0000312" key="11">
    <source>
        <dbReference type="EMBL" id="BAB01309.1"/>
    </source>
</evidence>
<evidence type="ECO:0007744" key="12">
    <source>
        <dbReference type="PDB" id="6H7D"/>
    </source>
</evidence>
<evidence type="ECO:0007744" key="13">
    <source>
        <dbReference type="PDB" id="7AAQ"/>
    </source>
</evidence>
<evidence type="ECO:0007829" key="14">
    <source>
        <dbReference type="PDB" id="6H7D"/>
    </source>
</evidence>
<evidence type="ECO:0007829" key="15">
    <source>
        <dbReference type="PDB" id="7AAQ"/>
    </source>
</evidence>
<keyword id="KW-0002">3D-structure</keyword>
<keyword id="KW-1015">Disulfide bond</keyword>
<keyword id="KW-0472">Membrane</keyword>
<keyword id="KW-1185">Reference proteome</keyword>
<keyword id="KW-0762">Sugar transport</keyword>
<keyword id="KW-0769">Symport</keyword>
<keyword id="KW-0812">Transmembrane</keyword>
<keyword id="KW-1133">Transmembrane helix</keyword>
<keyword id="KW-0813">Transport</keyword>
<reference key="1">
    <citation type="journal article" date="2000" name="DNA Res.">
        <title>Structural analysis of Arabidopsis thaliana chromosome 3. I. Sequence features of the regions of 4,504,864 bp covered by sixty P1 and TAC clones.</title>
        <authorList>
            <person name="Sato S."/>
            <person name="Nakamura Y."/>
            <person name="Kaneko T."/>
            <person name="Katoh T."/>
            <person name="Asamizu E."/>
            <person name="Tabata S."/>
        </authorList>
    </citation>
    <scope>NUCLEOTIDE SEQUENCE [LARGE SCALE GENOMIC DNA]</scope>
    <source>
        <strain>cv. Columbia</strain>
    </source>
</reference>
<reference key="2">
    <citation type="journal article" date="2017" name="Plant J.">
        <title>Araport11: a complete reannotation of the Arabidopsis thaliana reference genome.</title>
        <authorList>
            <person name="Cheng C.Y."/>
            <person name="Krishnakumar V."/>
            <person name="Chan A.P."/>
            <person name="Thibaud-Nissen F."/>
            <person name="Schobel S."/>
            <person name="Town C.D."/>
        </authorList>
    </citation>
    <scope>GENOME REANNOTATION</scope>
    <source>
        <strain>cv. Columbia</strain>
    </source>
</reference>
<reference key="3">
    <citation type="submission" date="2005-05" db="EMBL/GenBank/DDBJ databases">
        <authorList>
            <person name="Underwood B.A."/>
            <person name="Xiao Y.-L."/>
            <person name="Moskal W.A. Jr."/>
            <person name="Monaghan E.L."/>
            <person name="Wang W."/>
            <person name="Redman J.C."/>
            <person name="Wu H.C."/>
            <person name="Utterback T."/>
            <person name="Town C.D."/>
        </authorList>
    </citation>
    <scope>NUCLEOTIDE SEQUENCE [LARGE SCALE MRNA]</scope>
    <source>
        <strain>cv. Columbia</strain>
    </source>
</reference>
<reference key="4">
    <citation type="submission" date="1997-09" db="EMBL/GenBank/DDBJ databases">
        <authorList>
            <person name="Baier K."/>
            <person name="Truernit E."/>
            <person name="Sauer N."/>
        </authorList>
    </citation>
    <scope>NUCLEOTIDE SEQUENCE [GENOMIC DNA] OF 407-474</scope>
    <source>
        <strain>cv. C24</strain>
    </source>
</reference>
<reference key="5">
    <citation type="journal article" date="2006" name="BMC Evol. Biol.">
        <title>The monosaccharide transporter gene family in land plants is ancient and shows differential subfamily expression and expansion across lineages.</title>
        <authorList>
            <person name="Johnson D.A."/>
            <person name="Hill J.P."/>
            <person name="Thomas M.A."/>
        </authorList>
    </citation>
    <scope>GENE FAMILY</scope>
</reference>
<reference key="6">
    <citation type="journal article" date="2016" name="J. Exp. Bot.">
        <title>STP10 encodes a high-affinity monosaccharide transporter and is induced under low-glucose conditions in pollen tubes of Arabidopsis.</title>
        <authorList>
            <person name="Rottmann T."/>
            <person name="Zierer W."/>
            <person name="Subert C."/>
            <person name="Sauer N."/>
            <person name="Stadler R."/>
        </authorList>
    </citation>
    <scope>FUNCTION</scope>
    <scope>SUBCELLULAR LOCATION</scope>
    <scope>TISSUE SPECIFICITY</scope>
    <scope>INDUCTION</scope>
    <scope>DISRUPTION PHENOTYPE</scope>
</reference>
<reference key="7">
    <citation type="journal article" date="2019" name="Nat. Commun.">
        <title>Crystal structure of the plant symporter STP10 illuminates sugar uptake mechanism in monosaccharide transporter superfamily.</title>
        <authorList>
            <person name="Paulsen P.A."/>
            <person name="Custodio T.F."/>
            <person name="Pedersen B.P."/>
        </authorList>
    </citation>
    <scope>X-RAY CRYSTALLOGRAPHY (2.40 ANGSTROMS) OF 2-514 IN COMPLEX WITH BETA-D-GLUCOSE</scope>
    <scope>FUNCTION</scope>
    <scope>BIOPHYSICOCHEMICAL PROPERTIES</scope>
    <scope>DISULFIDE BONDS</scope>
    <scope>MUTAGENESIS OF LEU-43; CYS-77 AND CYS-449</scope>
</reference>
<reference key="8">
    <citation type="journal article" date="2021" name="Nat. Plants">
        <title>Molecular mechanism of sugar transport in plants unveiled by structures of glucose/H+ symporter STP10.</title>
        <authorList>
            <person name="Bavnhoj L."/>
            <person name="Paulsen P.A."/>
            <person name="Flores-Canales J.C."/>
            <person name="Schiott B."/>
            <person name="Pedersen B.P."/>
        </authorList>
    </citation>
    <scope>X-RAY CRYSTALLOGRAPHY (2.64 ANGSTROMS) IN COMPLEX WITH BETA-D-GLUCOSE</scope>
    <scope>FUNCTION</scope>
    <scope>DISULFIDE BONDS</scope>
    <scope>MUTAGENESIS OF PHE-39; GLU-162; GLN-177; ILE-184 AND ASP-344</scope>
</reference>
<protein>
    <recommendedName>
        <fullName evidence="5">Sugar transport protein 10</fullName>
        <shortName evidence="6">AtSTP10</shortName>
    </recommendedName>
    <alternativeName>
        <fullName evidence="7">D-glucose-H(+) symport protein STP10</fullName>
    </alternativeName>
    <alternativeName>
        <fullName evidence="7">D-glucose-proton symporter STP10</fullName>
    </alternativeName>
    <alternativeName>
        <fullName evidence="7">Hexose transporter 10</fullName>
    </alternativeName>
</protein>